<organism>
    <name type="scientific">Sus scrofa</name>
    <name type="common">Pig</name>
    <dbReference type="NCBI Taxonomy" id="9823"/>
    <lineage>
        <taxon>Eukaryota</taxon>
        <taxon>Metazoa</taxon>
        <taxon>Chordata</taxon>
        <taxon>Craniata</taxon>
        <taxon>Vertebrata</taxon>
        <taxon>Euteleostomi</taxon>
        <taxon>Mammalia</taxon>
        <taxon>Eutheria</taxon>
        <taxon>Laurasiatheria</taxon>
        <taxon>Artiodactyla</taxon>
        <taxon>Suina</taxon>
        <taxon>Suidae</taxon>
        <taxon>Sus</taxon>
    </lineage>
</organism>
<keyword id="KW-0165">Cleavage on pair of basic residues</keyword>
<keyword id="KW-0903">Direct protein sequencing</keyword>
<keyword id="KW-1015">Disulfide bond</keyword>
<keyword id="KW-0272">Extracellular matrix</keyword>
<keyword id="KW-0325">Glycoprotein</keyword>
<keyword id="KW-0339">Growth factor</keyword>
<keyword id="KW-0497">Mitogen</keyword>
<keyword id="KW-1185">Reference proteome</keyword>
<keyword id="KW-0964">Secreted</keyword>
<keyword id="KW-0732">Signal</keyword>
<name>TGFB2_PIG</name>
<feature type="signal peptide" evidence="5">
    <location>
        <begin position="1"/>
        <end position="20"/>
    </location>
</feature>
<feature type="chain" id="PRO_0000456183" description="Transforming growth factor beta-2 proprotein">
    <location>
        <begin position="21"/>
        <end position="435"/>
    </location>
</feature>
<feature type="chain" id="PRO_0000033788" description="Latency-associated peptide" evidence="4">
    <location>
        <begin position="21"/>
        <end position="302"/>
    </location>
</feature>
<feature type="chain" id="PRO_0000033789" description="Transforming growth factor beta-2" evidence="4">
    <location>
        <begin position="303"/>
        <end position="435"/>
    </location>
</feature>
<feature type="glycosylation site" description="N-linked (GlcNAc...) asparagine" evidence="5">
    <location>
        <position position="72"/>
    </location>
</feature>
<feature type="glycosylation site" description="N-linked (GlcNAc...) asparagine" evidence="5">
    <location>
        <position position="140"/>
    </location>
</feature>
<feature type="glycosylation site" description="N-linked (GlcNAc...) asparagine" evidence="5">
    <location>
        <position position="241"/>
    </location>
</feature>
<feature type="disulfide bond" evidence="4">
    <location>
        <begin position="309"/>
        <end position="318"/>
    </location>
</feature>
<feature type="disulfide bond" evidence="4">
    <location>
        <begin position="317"/>
        <end position="380"/>
    </location>
</feature>
<feature type="disulfide bond" evidence="4">
    <location>
        <begin position="346"/>
        <end position="411"/>
    </location>
</feature>
<feature type="disulfide bond" evidence="4">
    <location>
        <begin position="350"/>
        <end position="413"/>
    </location>
</feature>
<feature type="disulfide bond" description="Interchain" evidence="4">
    <location>
        <position position="379"/>
    </location>
</feature>
<comment type="function">
    <molecule>Transforming growth factor beta-2 proprotein</molecule>
    <text evidence="1 2">Precursor of the Latency-associated peptide (LAP) and Transforming growth factor beta-2 (TGF-beta-2) chains, which constitute the regulatory and active subunit of TGF-beta-2, respectively.</text>
</comment>
<comment type="function">
    <molecule>Latency-associated peptide</molecule>
    <text evidence="1 2">Required to maintain the Transforming growth factor beta-2 (TGF-beta-2) chain in a latent state during storage in extracellular matrix. Associates non-covalently with TGF-beta-2 and regulates its activation via interaction with 'milieu molecules', such as LTBP1 and LRRC32/GARP, that control activation of TGF-beta-2.</text>
</comment>
<comment type="function">
    <molecule>Transforming growth factor beta-2</molecule>
    <text evidence="1 2 4">Multifunctional protein that regulates various processes such as angiogenesis and heart development (By similarity). Activation into mature form follows different steps: following cleavage of the proprotein in the Golgi apparatus, Latency-associated peptide (LAP) and Transforming growth factor beta-2 (TGF-beta-2) chains remain non-covalently linked rendering TGF-beta-2 inactive during storage in extracellular matrix (By similarity). At the same time, LAP chain interacts with 'milieu molecules', such as LTBP1 and LRRC32/GARP, that control activation of TGF-beta-2 and maintain it in a latent state during storage in extracellular milieus (By similarity). Once activated following release of LAP, TGF-beta-2 acts by binding to TGF-beta receptors (TGFBR1 and TGFBR2), which transduce signal (By similarity).</text>
</comment>
<comment type="subunit">
    <text evidence="1 3 4">Interacts with the serine proteases, HTRA1 and HTRA3 (By similarity). Interacts with ASPN (By similarity). Interacts with MFAP5 (By similarity).</text>
</comment>
<comment type="subunit">
    <molecule>Latency-associated peptide</molecule>
    <text evidence="1 3 4">Interacts with Transforming growth factor beta-2 (TGF-beta-2) chain; interaction is non-covalent and maintains (TGF-beta-2) in a latent state (By similarity). Interacts with LRRC32/GARP; leading to regulate activation of TGF-beta-2 (By similarity). Interacts with NREP; the interaction results in a decrease in TGFB2 autoinduction (By similarity).</text>
</comment>
<comment type="subunit">
    <molecule>Transforming growth factor beta-2</molecule>
    <text evidence="1 3 4">Transforming growth factor beta-2: Homodimer; disulfide-linked (By similarity). Transforming growth factor beta-2: Interacts with TGF-beta receptors (TGFBR1 and TGFBR2), leading to signal transduction (By similarity).</text>
</comment>
<comment type="subcellular location">
    <molecule>Latency-associated peptide</molecule>
    <subcellularLocation>
        <location evidence="1">Secreted</location>
        <location evidence="1">Extracellular space</location>
        <location evidence="1">Extracellular matrix</location>
    </subcellularLocation>
</comment>
<comment type="subcellular location">
    <molecule>Transforming growth factor beta-2</molecule>
    <subcellularLocation>
        <location evidence="1">Secreted</location>
    </subcellularLocation>
</comment>
<comment type="PTM">
    <molecule>Transforming growth factor beta-2</molecule>
    <text evidence="1">The precursor proprotein is cleaved in the Golgi apparatus to form Transforming growth factor beta-2 (TGF-beta-2) and Latency-associated peptide (LAP) chains, which remain non-covalently linked, rendering TGF-beta-2 inactive.</text>
</comment>
<comment type="similarity">
    <text evidence="6">Belongs to the TGF-beta family.</text>
</comment>
<protein>
    <recommendedName>
        <fullName>Transforming growth factor beta-2 proprotein</fullName>
    </recommendedName>
    <component>
        <recommendedName>
            <fullName>Latency-associated peptide</fullName>
            <shortName>LAP</shortName>
        </recommendedName>
    </component>
    <component>
        <recommendedName>
            <fullName>Transforming growth factor beta-2</fullName>
            <shortName>TGF-beta-2</shortName>
        </recommendedName>
    </component>
</protein>
<accession>P09858</accession>
<evidence type="ECO:0000250" key="1">
    <source>
        <dbReference type="UniProtKB" id="P01137"/>
    </source>
</evidence>
<evidence type="ECO:0000250" key="2">
    <source>
        <dbReference type="UniProtKB" id="P04202"/>
    </source>
</evidence>
<evidence type="ECO:0000250" key="3">
    <source>
        <dbReference type="UniProtKB" id="P27090"/>
    </source>
</evidence>
<evidence type="ECO:0000250" key="4">
    <source>
        <dbReference type="UniProtKB" id="P61812"/>
    </source>
</evidence>
<evidence type="ECO:0000255" key="5"/>
<evidence type="ECO:0000305" key="6"/>
<dbReference type="EMBL" id="L08375">
    <property type="protein sequence ID" value="AAB03850.1"/>
    <property type="molecule type" value="mRNA"/>
</dbReference>
<dbReference type="PIR" id="B26356">
    <property type="entry name" value="B26356"/>
</dbReference>
<dbReference type="SMR" id="P09858"/>
<dbReference type="FunCoup" id="P09858">
    <property type="interactions" value="263"/>
</dbReference>
<dbReference type="STRING" id="9823.ENSSSCP00000035439"/>
<dbReference type="GlyCosmos" id="P09858">
    <property type="glycosylation" value="3 sites, No reported glycans"/>
</dbReference>
<dbReference type="GlyGen" id="P09858">
    <property type="glycosylation" value="3 sites"/>
</dbReference>
<dbReference type="InParanoid" id="P09858"/>
<dbReference type="Proteomes" id="UP000008227">
    <property type="component" value="Unplaced"/>
</dbReference>
<dbReference type="Proteomes" id="UP000314985">
    <property type="component" value="Unplaced"/>
</dbReference>
<dbReference type="Proteomes" id="UP000694570">
    <property type="component" value="Unplaced"/>
</dbReference>
<dbReference type="Proteomes" id="UP000694571">
    <property type="component" value="Unplaced"/>
</dbReference>
<dbReference type="Proteomes" id="UP000694720">
    <property type="component" value="Unplaced"/>
</dbReference>
<dbReference type="Proteomes" id="UP000694722">
    <property type="component" value="Unplaced"/>
</dbReference>
<dbReference type="Proteomes" id="UP000694723">
    <property type="component" value="Unplaced"/>
</dbReference>
<dbReference type="Proteomes" id="UP000694724">
    <property type="component" value="Unplaced"/>
</dbReference>
<dbReference type="Proteomes" id="UP000694725">
    <property type="component" value="Unplaced"/>
</dbReference>
<dbReference type="Proteomes" id="UP000694726">
    <property type="component" value="Unplaced"/>
</dbReference>
<dbReference type="Proteomes" id="UP000694727">
    <property type="component" value="Unplaced"/>
</dbReference>
<dbReference type="Proteomes" id="UP000694728">
    <property type="component" value="Unplaced"/>
</dbReference>
<dbReference type="GO" id="GO:0030424">
    <property type="term" value="C:axon"/>
    <property type="evidence" value="ECO:0000250"/>
    <property type="project" value="UniProtKB"/>
</dbReference>
<dbReference type="GO" id="GO:0031012">
    <property type="term" value="C:extracellular matrix"/>
    <property type="evidence" value="ECO:0000250"/>
    <property type="project" value="UniProtKB"/>
</dbReference>
<dbReference type="GO" id="GO:0005576">
    <property type="term" value="C:extracellular region"/>
    <property type="evidence" value="ECO:0000250"/>
    <property type="project" value="UniProtKB"/>
</dbReference>
<dbReference type="GO" id="GO:0005615">
    <property type="term" value="C:extracellular space"/>
    <property type="evidence" value="ECO:0000250"/>
    <property type="project" value="AgBase"/>
</dbReference>
<dbReference type="GO" id="GO:0043025">
    <property type="term" value="C:neuronal cell body"/>
    <property type="evidence" value="ECO:0000250"/>
    <property type="project" value="UniProtKB"/>
</dbReference>
<dbReference type="GO" id="GO:0001540">
    <property type="term" value="F:amyloid-beta binding"/>
    <property type="evidence" value="ECO:0000250"/>
    <property type="project" value="UniProtKB"/>
</dbReference>
<dbReference type="GO" id="GO:0005125">
    <property type="term" value="F:cytokine activity"/>
    <property type="evidence" value="ECO:0000318"/>
    <property type="project" value="GO_Central"/>
</dbReference>
<dbReference type="GO" id="GO:0008083">
    <property type="term" value="F:growth factor activity"/>
    <property type="evidence" value="ECO:0007669"/>
    <property type="project" value="UniProtKB-KW"/>
</dbReference>
<dbReference type="GO" id="GO:0042803">
    <property type="term" value="F:protein homodimerization activity"/>
    <property type="evidence" value="ECO:0000250"/>
    <property type="project" value="UniProtKB"/>
</dbReference>
<dbReference type="GO" id="GO:0005102">
    <property type="term" value="F:signaling receptor binding"/>
    <property type="evidence" value="ECO:0000250"/>
    <property type="project" value="UniProtKB"/>
</dbReference>
<dbReference type="GO" id="GO:0005160">
    <property type="term" value="F:transforming growth factor beta receptor binding"/>
    <property type="evidence" value="ECO:0000250"/>
    <property type="project" value="UniProtKB"/>
</dbReference>
<dbReference type="GO" id="GO:0005114">
    <property type="term" value="F:type II transforming growth factor beta receptor binding"/>
    <property type="evidence" value="ECO:0000250"/>
    <property type="project" value="UniProtKB"/>
</dbReference>
<dbReference type="GO" id="GO:0034714">
    <property type="term" value="F:type III transforming growth factor beta receptor binding"/>
    <property type="evidence" value="ECO:0000250"/>
    <property type="project" value="AgBase"/>
</dbReference>
<dbReference type="GO" id="GO:0060317">
    <property type="term" value="P:cardiac epithelial to mesenchymal transition"/>
    <property type="evidence" value="ECO:0000250"/>
    <property type="project" value="UniProtKB"/>
</dbReference>
<dbReference type="GO" id="GO:0060038">
    <property type="term" value="P:cardiac muscle cell proliferation"/>
    <property type="evidence" value="ECO:0000250"/>
    <property type="project" value="UniProtKB"/>
</dbReference>
<dbReference type="GO" id="GO:0010002">
    <property type="term" value="P:cardioblast differentiation"/>
    <property type="evidence" value="ECO:0000250"/>
    <property type="project" value="UniProtKB"/>
</dbReference>
<dbReference type="GO" id="GO:0016477">
    <property type="term" value="P:cell migration"/>
    <property type="evidence" value="ECO:0000250"/>
    <property type="project" value="UniProtKB"/>
</dbReference>
<dbReference type="GO" id="GO:0000902">
    <property type="term" value="P:cell morphogenesis"/>
    <property type="evidence" value="ECO:0000250"/>
    <property type="project" value="UniProtKB"/>
</dbReference>
<dbReference type="GO" id="GO:0045216">
    <property type="term" value="P:cell-cell junction organization"/>
    <property type="evidence" value="ECO:0000250"/>
    <property type="project" value="UniProtKB"/>
</dbReference>
<dbReference type="GO" id="GO:0030199">
    <property type="term" value="P:collagen fibril organization"/>
    <property type="evidence" value="ECO:0000250"/>
    <property type="project" value="UniProtKB"/>
</dbReference>
<dbReference type="GO" id="GO:0042416">
    <property type="term" value="P:dopamine biosynthetic process"/>
    <property type="evidence" value="ECO:0000250"/>
    <property type="project" value="UniProtKB"/>
</dbReference>
<dbReference type="GO" id="GO:0048566">
    <property type="term" value="P:embryonic digestive tract development"/>
    <property type="evidence" value="ECO:0000250"/>
    <property type="project" value="AgBase"/>
</dbReference>
<dbReference type="GO" id="GO:0030855">
    <property type="term" value="P:epithelial cell differentiation"/>
    <property type="evidence" value="ECO:0000250"/>
    <property type="project" value="UniProtKB"/>
</dbReference>
<dbReference type="GO" id="GO:0001837">
    <property type="term" value="P:epithelial to mesenchymal transition"/>
    <property type="evidence" value="ECO:0000250"/>
    <property type="project" value="UniProtKB"/>
</dbReference>
<dbReference type="GO" id="GO:0097191">
    <property type="term" value="P:extrinsic apoptotic signaling pathway"/>
    <property type="evidence" value="ECO:0000250"/>
    <property type="project" value="UniProtKB"/>
</dbReference>
<dbReference type="GO" id="GO:0001654">
    <property type="term" value="P:eye development"/>
    <property type="evidence" value="ECO:0000250"/>
    <property type="project" value="UniProtKB"/>
</dbReference>
<dbReference type="GO" id="GO:0008347">
    <property type="term" value="P:glial cell migration"/>
    <property type="evidence" value="ECO:0000250"/>
    <property type="project" value="UniProtKB"/>
</dbReference>
<dbReference type="GO" id="GO:0001942">
    <property type="term" value="P:hair follicle development"/>
    <property type="evidence" value="ECO:0000250"/>
    <property type="project" value="UniProtKB"/>
</dbReference>
<dbReference type="GO" id="GO:0031069">
    <property type="term" value="P:hair follicle morphogenesis"/>
    <property type="evidence" value="ECO:0000250"/>
    <property type="project" value="UniProtKB"/>
</dbReference>
<dbReference type="GO" id="GO:0007507">
    <property type="term" value="P:heart development"/>
    <property type="evidence" value="ECO:0000250"/>
    <property type="project" value="UniProtKB"/>
</dbReference>
<dbReference type="GO" id="GO:0003007">
    <property type="term" value="P:heart morphogenesis"/>
    <property type="evidence" value="ECO:0000250"/>
    <property type="project" value="UniProtKB"/>
</dbReference>
<dbReference type="GO" id="GO:0030097">
    <property type="term" value="P:hemopoiesis"/>
    <property type="evidence" value="ECO:0000250"/>
    <property type="project" value="UniProtKB"/>
</dbReference>
<dbReference type="GO" id="GO:0001707">
    <property type="term" value="P:mesoderm formation"/>
    <property type="evidence" value="ECO:0000304"/>
    <property type="project" value="UniProtKB"/>
</dbReference>
<dbReference type="GO" id="GO:0030308">
    <property type="term" value="P:negative regulation of cell growth"/>
    <property type="evidence" value="ECO:0000250"/>
    <property type="project" value="AgBase"/>
</dbReference>
<dbReference type="GO" id="GO:0008285">
    <property type="term" value="P:negative regulation of cell population proliferation"/>
    <property type="evidence" value="ECO:0000250"/>
    <property type="project" value="UniProtKB"/>
</dbReference>
<dbReference type="GO" id="GO:0050680">
    <property type="term" value="P:negative regulation of epithelial cell proliferation"/>
    <property type="evidence" value="ECO:0000250"/>
    <property type="project" value="UniProtKB"/>
</dbReference>
<dbReference type="GO" id="GO:0010936">
    <property type="term" value="P:negative regulation of macrophage cytokine production"/>
    <property type="evidence" value="ECO:0000250"/>
    <property type="project" value="UniProtKB"/>
</dbReference>
<dbReference type="GO" id="GO:0048666">
    <property type="term" value="P:neuron development"/>
    <property type="evidence" value="ECO:0000250"/>
    <property type="project" value="UniProtKB"/>
</dbReference>
<dbReference type="GO" id="GO:0030593">
    <property type="term" value="P:neutrophil chemotaxis"/>
    <property type="evidence" value="ECO:0000314"/>
    <property type="project" value="UniProtKB"/>
</dbReference>
<dbReference type="GO" id="GO:0051891">
    <property type="term" value="P:positive regulation of cardioblast differentiation"/>
    <property type="evidence" value="ECO:0000250"/>
    <property type="project" value="UniProtKB"/>
</dbReference>
<dbReference type="GO" id="GO:0033630">
    <property type="term" value="P:positive regulation of cell adhesion mediated by integrin"/>
    <property type="evidence" value="ECO:0000250"/>
    <property type="project" value="UniProtKB"/>
</dbReference>
<dbReference type="GO" id="GO:0045787">
    <property type="term" value="P:positive regulation of cell cycle"/>
    <property type="evidence" value="ECO:0000250"/>
    <property type="project" value="UniProtKB"/>
</dbReference>
<dbReference type="GO" id="GO:0051781">
    <property type="term" value="P:positive regulation of cell division"/>
    <property type="evidence" value="ECO:0007669"/>
    <property type="project" value="UniProtKB-KW"/>
</dbReference>
<dbReference type="GO" id="GO:0030307">
    <property type="term" value="P:positive regulation of cell growth"/>
    <property type="evidence" value="ECO:0000250"/>
    <property type="project" value="UniProtKB"/>
</dbReference>
<dbReference type="GO" id="GO:0008284">
    <property type="term" value="P:positive regulation of cell population proliferation"/>
    <property type="evidence" value="ECO:0000250"/>
    <property type="project" value="UniProtKB"/>
</dbReference>
<dbReference type="GO" id="GO:0010634">
    <property type="term" value="P:positive regulation of epithelial cell migration"/>
    <property type="evidence" value="ECO:0000250"/>
    <property type="project" value="UniProtKB"/>
</dbReference>
<dbReference type="GO" id="GO:0010718">
    <property type="term" value="P:positive regulation of epithelial to mesenchymal transition"/>
    <property type="evidence" value="ECO:0000250"/>
    <property type="project" value="UniProtKB"/>
</dbReference>
<dbReference type="GO" id="GO:0045823">
    <property type="term" value="P:positive regulation of heart contraction"/>
    <property type="evidence" value="ECO:0000250"/>
    <property type="project" value="UniProtKB"/>
</dbReference>
<dbReference type="GO" id="GO:0050778">
    <property type="term" value="P:positive regulation of immune response"/>
    <property type="evidence" value="ECO:0000314"/>
    <property type="project" value="UniProtKB"/>
</dbReference>
<dbReference type="GO" id="GO:0045726">
    <property type="term" value="P:positive regulation of integrin biosynthetic process"/>
    <property type="evidence" value="ECO:0000250"/>
    <property type="project" value="UniProtKB"/>
</dbReference>
<dbReference type="GO" id="GO:0043525">
    <property type="term" value="P:positive regulation of neuron apoptotic process"/>
    <property type="evidence" value="ECO:0000250"/>
    <property type="project" value="UniProtKB"/>
</dbReference>
<dbReference type="GO" id="GO:0051897">
    <property type="term" value="P:positive regulation of phosphatidylinositol 3-kinase/protein kinase B signal transduction"/>
    <property type="evidence" value="ECO:0000250"/>
    <property type="project" value="UniProtKB"/>
</dbReference>
<dbReference type="GO" id="GO:0050714">
    <property type="term" value="P:positive regulation of protein secretion"/>
    <property type="evidence" value="ECO:0000250"/>
    <property type="project" value="UniProtKB"/>
</dbReference>
<dbReference type="GO" id="GO:0060391">
    <property type="term" value="P:positive regulation of SMAD protein signal transduction"/>
    <property type="evidence" value="ECO:0000250"/>
    <property type="project" value="UniProtKB"/>
</dbReference>
<dbReference type="GO" id="GO:0032874">
    <property type="term" value="P:positive regulation of stress-activated MAPK cascade"/>
    <property type="evidence" value="ECO:0000250"/>
    <property type="project" value="UniProtKB"/>
</dbReference>
<dbReference type="GO" id="GO:0051795">
    <property type="term" value="P:positive regulation of timing of catagen"/>
    <property type="evidence" value="ECO:0000250"/>
    <property type="project" value="UniProtKB"/>
</dbReference>
<dbReference type="GO" id="GO:0042127">
    <property type="term" value="P:regulation of cell population proliferation"/>
    <property type="evidence" value="ECO:0000250"/>
    <property type="project" value="UniProtKB"/>
</dbReference>
<dbReference type="GO" id="GO:0051794">
    <property type="term" value="P:regulation of timing of catagen"/>
    <property type="evidence" value="ECO:0000250"/>
    <property type="project" value="UniProtKB"/>
</dbReference>
<dbReference type="GO" id="GO:0032909">
    <property type="term" value="P:regulation of transforming growth factor beta2 production"/>
    <property type="evidence" value="ECO:0000250"/>
    <property type="project" value="UniProtKB"/>
</dbReference>
<dbReference type="GO" id="GO:0001666">
    <property type="term" value="P:response to hypoxia"/>
    <property type="evidence" value="ECO:0000250"/>
    <property type="project" value="UniProtKB"/>
</dbReference>
<dbReference type="GO" id="GO:0032570">
    <property type="term" value="P:response to progesterone"/>
    <property type="evidence" value="ECO:0000250"/>
    <property type="project" value="UniProtKB"/>
</dbReference>
<dbReference type="GO" id="GO:0009611">
    <property type="term" value="P:response to wounding"/>
    <property type="evidence" value="ECO:0000250"/>
    <property type="project" value="AgBase"/>
</dbReference>
<dbReference type="GO" id="GO:0007435">
    <property type="term" value="P:salivary gland morphogenesis"/>
    <property type="evidence" value="ECO:0000250"/>
    <property type="project" value="AgBase"/>
</dbReference>
<dbReference type="GO" id="GO:0023052">
    <property type="term" value="P:signaling"/>
    <property type="evidence" value="ECO:0000250"/>
    <property type="project" value="UniProtKB"/>
</dbReference>
<dbReference type="GO" id="GO:0048103">
    <property type="term" value="P:somatic stem cell division"/>
    <property type="evidence" value="ECO:0000250"/>
    <property type="project" value="UniProtKB"/>
</dbReference>
<dbReference type="GO" id="GO:0007179">
    <property type="term" value="P:transforming growth factor beta receptor signaling pathway"/>
    <property type="evidence" value="ECO:0000250"/>
    <property type="project" value="UniProtKB"/>
</dbReference>
<dbReference type="GO" id="GO:0042060">
    <property type="term" value="P:wound healing"/>
    <property type="evidence" value="ECO:0000250"/>
    <property type="project" value="UniProtKB"/>
</dbReference>
<dbReference type="CDD" id="cd19385">
    <property type="entry name" value="TGF_beta_TGFB2"/>
    <property type="match status" value="1"/>
</dbReference>
<dbReference type="FunFam" id="2.10.90.10:FF:000004">
    <property type="entry name" value="Transforming growth factor beta"/>
    <property type="match status" value="1"/>
</dbReference>
<dbReference type="FunFam" id="2.60.120.970:FF:000002">
    <property type="entry name" value="Transforming growth factor beta"/>
    <property type="match status" value="1"/>
</dbReference>
<dbReference type="Gene3D" id="2.60.120.970">
    <property type="match status" value="1"/>
</dbReference>
<dbReference type="Gene3D" id="2.10.90.10">
    <property type="entry name" value="Cystine-knot cytokines"/>
    <property type="match status" value="1"/>
</dbReference>
<dbReference type="InterPro" id="IPR029034">
    <property type="entry name" value="Cystine-knot_cytokine"/>
</dbReference>
<dbReference type="InterPro" id="IPR001839">
    <property type="entry name" value="TGF-b_C"/>
</dbReference>
<dbReference type="InterPro" id="IPR001111">
    <property type="entry name" value="TGF-b_propeptide"/>
</dbReference>
<dbReference type="InterPro" id="IPR016319">
    <property type="entry name" value="TGF-beta"/>
</dbReference>
<dbReference type="InterPro" id="IPR015615">
    <property type="entry name" value="TGF-beta-rel"/>
</dbReference>
<dbReference type="InterPro" id="IPR003940">
    <property type="entry name" value="TGFb2"/>
</dbReference>
<dbReference type="InterPro" id="IPR017948">
    <property type="entry name" value="TGFb_CS"/>
</dbReference>
<dbReference type="PANTHER" id="PTHR11848">
    <property type="entry name" value="TGF-BETA FAMILY"/>
    <property type="match status" value="1"/>
</dbReference>
<dbReference type="PANTHER" id="PTHR11848:SF141">
    <property type="entry name" value="TRANSFORMING GROWTH FACTOR BETA-2 PROPROTEIN"/>
    <property type="match status" value="1"/>
</dbReference>
<dbReference type="Pfam" id="PF00019">
    <property type="entry name" value="TGF_beta"/>
    <property type="match status" value="1"/>
</dbReference>
<dbReference type="Pfam" id="PF00688">
    <property type="entry name" value="TGFb_propeptide"/>
    <property type="match status" value="1"/>
</dbReference>
<dbReference type="PIRSF" id="PIRSF001787">
    <property type="entry name" value="TGF-beta"/>
    <property type="match status" value="1"/>
</dbReference>
<dbReference type="PRINTS" id="PR01423">
    <property type="entry name" value="TGFBETA"/>
</dbReference>
<dbReference type="PRINTS" id="PR01425">
    <property type="entry name" value="TGFBETA2"/>
</dbReference>
<dbReference type="SMART" id="SM00204">
    <property type="entry name" value="TGFB"/>
    <property type="match status" value="1"/>
</dbReference>
<dbReference type="SUPFAM" id="SSF57501">
    <property type="entry name" value="Cystine-knot cytokines"/>
    <property type="match status" value="1"/>
</dbReference>
<dbReference type="PROSITE" id="PS00250">
    <property type="entry name" value="TGF_BETA_1"/>
    <property type="match status" value="1"/>
</dbReference>
<dbReference type="PROSITE" id="PS51362">
    <property type="entry name" value="TGF_BETA_2"/>
    <property type="match status" value="1"/>
</dbReference>
<proteinExistence type="evidence at protein level"/>
<reference key="1">
    <citation type="submission" date="1992-12" db="EMBL/GenBank/DDBJ databases">
        <authorList>
            <person name="Zhou Y."/>
        </authorList>
    </citation>
    <scope>NUCLEOTIDE SEQUENCE [MRNA] OF 2-435</scope>
    <source>
        <tissue>Lung</tissue>
    </source>
</reference>
<reference key="2">
    <citation type="journal article" date="1987" name="Cell">
        <title>The transforming growth factor-beta system, a complex pattern of cross-reactive ligands and receptors.</title>
        <authorList>
            <person name="Cheifetz S."/>
            <person name="Weatherbee J.A."/>
            <person name="Tsang M.L.S."/>
            <person name="Anderson J.K."/>
            <person name="Mole J.E."/>
            <person name="Lucas R."/>
            <person name="Massague J."/>
        </authorList>
    </citation>
    <scope>PROTEIN SEQUENCE OF 303-345</scope>
</reference>
<gene>
    <name type="primary">TGFB2</name>
</gene>
<sequence>MHYCVLSAFLLLHLVTVALSLSTCSTLDMDQFMRKRIEAIRGQILSKLKLTSPPEDYPEPEEVPPEVISIYNSTRDLLQEKASRRAAACERERSDEEYYAKEVYKIDMPPFFPSENAIPPTFYRPYFRIVRFDVSAMEKNASNLVKAEFRVFRLQNPKARVAEQRIELYQILKSKDLTSPTQRYIDSKVVKTRAEGEWLSFDVTDAVHEWLHHKDRNLGFKISLHCPCCTFVPSNNYIIPNKSEELEARFAGIDGTSTYTSGDQKTIKSTRKKNSGKTPHLLLMLLPSYGLESQQSNRRKKRALDAAYCFRNVQDNCCLRPLYIDFKRDLGWKWIHEPKGYNANFCAGACPYLWSSDTQHSRVLSLYNTINPEASASPCCVSQDLEPLTILYYIGKTPKIEQLSNMIVKSCKCSKTKLAAFARLYHSHSNLGSET</sequence>